<dbReference type="EMBL" id="EU399241">
    <property type="protein sequence ID" value="ABY90373.1"/>
    <property type="molecule type" value="Genomic_DNA"/>
</dbReference>
<dbReference type="RefSeq" id="YP_001686741.1">
    <property type="nucleotide sequence ID" value="NC_010342.1"/>
</dbReference>
<dbReference type="SMR" id="B0ZSF3"/>
<dbReference type="GeneID" id="5912349"/>
<dbReference type="KEGG" id="vg:5912349"/>
<dbReference type="Proteomes" id="UP000001179">
    <property type="component" value="Segment"/>
</dbReference>
<dbReference type="GO" id="GO:0019028">
    <property type="term" value="C:viral capsid"/>
    <property type="evidence" value="ECO:0007669"/>
    <property type="project" value="UniProtKB-KW"/>
</dbReference>
<dbReference type="Gene3D" id="3.30.2400.10">
    <property type="entry name" value="Major capsid protein gp5"/>
    <property type="match status" value="1"/>
</dbReference>
<dbReference type="InterPro" id="IPR024455">
    <property type="entry name" value="Phage_capsid"/>
</dbReference>
<dbReference type="InterPro" id="IPR054612">
    <property type="entry name" value="Phage_capsid-like_C"/>
</dbReference>
<dbReference type="NCBIfam" id="TIGR01554">
    <property type="entry name" value="major_cap_HK97"/>
    <property type="match status" value="1"/>
</dbReference>
<dbReference type="Pfam" id="PF05065">
    <property type="entry name" value="Phage_capsid"/>
    <property type="match status" value="1"/>
</dbReference>
<dbReference type="SUPFAM" id="SSF56563">
    <property type="entry name" value="Major capsid protein gp5"/>
    <property type="match status" value="1"/>
</dbReference>
<sequence>MSATSEYPVQRWFGMEVLDHSQGAIDWSRMRSGAPLLAQHDRWSTKGQIGVVEEAWLDDDRRMRVRVRFSKSKEAEEIWRDVVDGIRRNVSCGYLPQEMVLEKREGDLEHFRVTRWQPFEISIVSVAADPTVGIGRSTDQTTSTITIRGSEMDEQENTTTTAQQPGKSVNGEHQEPTTRTFAEPKDGALEKERQRSADILALGERFSQRDLAMQAVTQGYSVDSFRRQLLDAQAPQPIDTNPGDNQRDLPQFNHQRPGQNVEKLGITERDMSQYSLLRAINAMATGDYKDAGFEREVSNAIADASGTEARGLFMPHEALFGGMLRQQEKKTPSKGGILVDTDMRTDMYTEILKNRTVLGALGATVLSGLQGDVDIPKQLSEGNFYWLDEDGEAPQSDIDFGTIGLSPKTISGAIAITRRLRKQASMSIENLVRNELLSGVAVTTDKGYLYGTGEDNQPLGLMYQTGIPGLTYADKFGWDEAVDMETQVGQANVSANGMGYLTSVGQRGAGKKTFVAAGTGERLWHNNEVNGYRAMASNQVNADTWVFGDWAQVLIALWGVVDLKVDQATKAASDGLILRVFQDVDVNARRKEAFSIARKSVA</sequence>
<organismHost>
    <name type="scientific">Vreelandella aquamarina</name>
    <dbReference type="NCBI Taxonomy" id="77097"/>
</organismHost>
<proteinExistence type="inferred from homology"/>
<reference key="1">
    <citation type="journal article" date="2008" name="J. Virol.">
        <title>The temperate marine phage PhiHAP-1 of Halomonas aquamarina possesses a linear plasmid-like prophage genome.</title>
        <authorList>
            <person name="Mobberley J.M."/>
            <person name="Authement R.N."/>
            <person name="Segall A.M."/>
            <person name="Paul J.H."/>
        </authorList>
    </citation>
    <scope>NUCLEOTIDE SEQUENCE [GENOMIC DNA]</scope>
</reference>
<comment type="function">
    <text evidence="1">Assembles to form an icosahedral capsid.</text>
</comment>
<comment type="subcellular location">
    <subcellularLocation>
        <location>Virion</location>
    </subcellularLocation>
    <text evidence="1">Forms the icosahedral capsid shell.</text>
</comment>
<comment type="similarity">
    <text evidence="3">Belongs to the HK97 phage major capsid protein family.</text>
</comment>
<feature type="chain" id="PRO_0000432347" description="Major capsid protein">
    <location>
        <begin position="1"/>
        <end position="602"/>
    </location>
</feature>
<feature type="region of interest" description="Disordered" evidence="2">
    <location>
        <begin position="149"/>
        <end position="191"/>
    </location>
</feature>
<feature type="region of interest" description="Disordered" evidence="2">
    <location>
        <begin position="234"/>
        <end position="261"/>
    </location>
</feature>
<feature type="compositionally biased region" description="Polar residues" evidence="2">
    <location>
        <begin position="157"/>
        <end position="167"/>
    </location>
</feature>
<feature type="compositionally biased region" description="Basic and acidic residues" evidence="2">
    <location>
        <begin position="170"/>
        <end position="191"/>
    </location>
</feature>
<name>CAPSD_BPHA1</name>
<keyword id="KW-0167">Capsid protein</keyword>
<keyword id="KW-0426">Late protein</keyword>
<keyword id="KW-1185">Reference proteome</keyword>
<keyword id="KW-0946">Virion</keyword>
<gene>
    <name evidence="4" type="ORF">HAPgp05</name>
</gene>
<accession>B0ZSF3</accession>
<protein>
    <recommendedName>
        <fullName evidence="3">Major capsid protein</fullName>
    </recommendedName>
    <alternativeName>
        <fullName evidence="3">Gene product 5</fullName>
        <shortName evidence="3">gp5</shortName>
    </alternativeName>
    <alternativeName>
        <fullName evidence="3">Major head protein</fullName>
    </alternativeName>
</protein>
<organism>
    <name type="scientific">Halomonas phage phiHAP-1 (isolate -/Gulf of Mexico/-/2001)</name>
    <name type="common">Bacteriophage phiHAP-1</name>
    <dbReference type="NCBI Taxonomy" id="1283337"/>
    <lineage>
        <taxon>Viruses</taxon>
        <taxon>Duplodnaviria</taxon>
        <taxon>Heunggongvirae</taxon>
        <taxon>Uroviricota</taxon>
        <taxon>Caudoviricetes</taxon>
        <taxon>Hapunavirus</taxon>
        <taxon>Hapunavirus HAP1</taxon>
    </lineage>
</organism>
<evidence type="ECO:0000250" key="1">
    <source>
        <dbReference type="UniProtKB" id="P49861"/>
    </source>
</evidence>
<evidence type="ECO:0000256" key="2">
    <source>
        <dbReference type="SAM" id="MobiDB-lite"/>
    </source>
</evidence>
<evidence type="ECO:0000305" key="3"/>
<evidence type="ECO:0000312" key="4">
    <source>
        <dbReference type="EMBL" id="ABY90373.1"/>
    </source>
</evidence>